<gene>
    <name type="primary">CSK</name>
</gene>
<organism>
    <name type="scientific">Gallus gallus</name>
    <name type="common">Chicken</name>
    <dbReference type="NCBI Taxonomy" id="9031"/>
    <lineage>
        <taxon>Eukaryota</taxon>
        <taxon>Metazoa</taxon>
        <taxon>Chordata</taxon>
        <taxon>Craniata</taxon>
        <taxon>Vertebrata</taxon>
        <taxon>Euteleostomi</taxon>
        <taxon>Archelosauria</taxon>
        <taxon>Archosauria</taxon>
        <taxon>Dinosauria</taxon>
        <taxon>Saurischia</taxon>
        <taxon>Theropoda</taxon>
        <taxon>Coelurosauria</taxon>
        <taxon>Aves</taxon>
        <taxon>Neognathae</taxon>
        <taxon>Galloanserae</taxon>
        <taxon>Galliformes</taxon>
        <taxon>Phasianidae</taxon>
        <taxon>Phasianinae</taxon>
        <taxon>Gallus</taxon>
    </lineage>
</organism>
<sequence length="450" mass="50751">MSGMQAVWPSGTECIAKYNFHGTAEQDLPFSKGDVLTIVAVTKDPNWYKAKNKVGREGIIPANYVQKREGVKAGIKLSLMPWFHGKITREQAERLLYPPETGLFLVRESTNYPGDYTLCVSCEGKVEHYRIIYSSSKLSIDEEVYFENLMQLVEHYTTDADGLCSRLIKPKVMEGTVAAQDEFSRSGWALNMKDLKLLQIIGKGEFGDVMLGDYRGNKVAVKCIKNDATAQAFLAEASVMTQLRHSNLVQLLGVIVEEKSGLYIVTEYMAKGSLVDYLRSRGRSVLGGDCLLKFSLDVCEAMEYLEANNFVHRDLAARNVLVSEDNIAKVSDFGLTKEASSTQDTGKLPVKWTAPEALREKKFSTKSDVWSFGILLWEIYSFGRVPYPRIPLKDVVPRVEKGYKMDPPDGCPAIVYEVMKKCWTLDPGHRPSFHQLREQLVHIKEKELYL</sequence>
<accession>P41239</accession>
<reference key="1">
    <citation type="journal article" date="1992" name="Proc. Natl. Acad. Sci. U.S.A.">
        <title>Molecular cloning and expression of chicken C-terminal Src kinase: lack of stable association with c-Src protein.</title>
        <authorList>
            <person name="Sabe H."/>
            <person name="Knudsen B."/>
            <person name="Okada M."/>
            <person name="Nada S."/>
            <person name="Nakagawa H."/>
            <person name="Hanafusa H."/>
        </authorList>
    </citation>
    <scope>NUCLEOTIDE SEQUENCE [MRNA]</scope>
    <source>
        <tissue>Brain</tissue>
    </source>
</reference>
<reference key="2">
    <citation type="journal article" date="1994" name="Mol. Cell. Biol.">
        <title>Functional analysis of Csk in signal transduction through the B-cell antigen receptor.</title>
        <authorList>
            <person name="Hata A."/>
            <person name="Sabe H."/>
            <person name="Kurosaki T."/>
            <person name="Takata M."/>
            <person name="Hanafusa H."/>
        </authorList>
    </citation>
    <scope>FUNCTION</scope>
</reference>
<evidence type="ECO:0000250" key="1"/>
<evidence type="ECO:0000250" key="2">
    <source>
        <dbReference type="UniProtKB" id="P41240"/>
    </source>
</evidence>
<evidence type="ECO:0000255" key="3">
    <source>
        <dbReference type="PROSITE-ProRule" id="PRU00159"/>
    </source>
</evidence>
<evidence type="ECO:0000255" key="4">
    <source>
        <dbReference type="PROSITE-ProRule" id="PRU00191"/>
    </source>
</evidence>
<evidence type="ECO:0000255" key="5">
    <source>
        <dbReference type="PROSITE-ProRule" id="PRU00192"/>
    </source>
</evidence>
<evidence type="ECO:0000255" key="6">
    <source>
        <dbReference type="PROSITE-ProRule" id="PRU10028"/>
    </source>
</evidence>
<evidence type="ECO:0000269" key="7">
    <source>
    </source>
</evidence>
<evidence type="ECO:0000305" key="8"/>
<proteinExistence type="evidence at transcript level"/>
<protein>
    <recommendedName>
        <fullName>Tyrosine-protein kinase CSK</fullName>
        <ecNumber evidence="2">2.7.10.2</ecNumber>
    </recommendedName>
    <alternativeName>
        <fullName>C-Src kinase</fullName>
    </alternativeName>
</protein>
<name>CSK_CHICK</name>
<feature type="chain" id="PRO_0000088069" description="Tyrosine-protein kinase CSK">
    <location>
        <begin position="1"/>
        <end position="450"/>
    </location>
</feature>
<feature type="domain" description="SH3" evidence="5">
    <location>
        <begin position="9"/>
        <end position="70"/>
    </location>
</feature>
<feature type="domain" description="SH2" evidence="4">
    <location>
        <begin position="82"/>
        <end position="171"/>
    </location>
</feature>
<feature type="domain" description="Protein kinase" evidence="3">
    <location>
        <begin position="195"/>
        <end position="450"/>
    </location>
</feature>
<feature type="region of interest" description="Interaction with PTPN8" evidence="1">
    <location>
        <begin position="9"/>
        <end position="70"/>
    </location>
</feature>
<feature type="active site" description="Proton acceptor" evidence="3 6">
    <location>
        <position position="314"/>
    </location>
</feature>
<feature type="binding site" evidence="3">
    <location>
        <begin position="201"/>
        <end position="209"/>
    </location>
    <ligand>
        <name>ATP</name>
        <dbReference type="ChEBI" id="CHEBI:30616"/>
    </ligand>
</feature>
<feature type="binding site" evidence="3">
    <location>
        <position position="222"/>
    </location>
    <ligand>
        <name>ATP</name>
        <dbReference type="ChEBI" id="CHEBI:30616"/>
    </ligand>
</feature>
<feature type="modified residue" description="Phosphoserine; by PKA" evidence="1">
    <location>
        <position position="364"/>
    </location>
</feature>
<feature type="modified residue" description="Phosphotyrosine; by autocatalysis" evidence="2">
    <location>
        <position position="416"/>
    </location>
</feature>
<comment type="function">
    <text evidence="1 7">Non-receptor tyrosine-protein kinase that plays an important role in the regulation of cell growth, differentiation, migration and immune response. Phosphorylates tyrosine residues located in the C-terminal tails of Src-family kinases (SFKs). Upon tail phosphorylation, Src-family members engage in intramolecular interactions between the phosphotyrosine tail and the SH2 domain that result in an inactive conformation. To inhibit SFKs, CSK is recruited to the plasma membrane via binding to transmembrane proteins or adapter proteins located near the plasma membrane (By similarity).</text>
</comment>
<comment type="catalytic activity">
    <reaction evidence="2 6">
        <text>L-tyrosyl-[protein] + ATP = O-phospho-L-tyrosyl-[protein] + ADP + H(+)</text>
        <dbReference type="Rhea" id="RHEA:10596"/>
        <dbReference type="Rhea" id="RHEA-COMP:10136"/>
        <dbReference type="Rhea" id="RHEA-COMP:20101"/>
        <dbReference type="ChEBI" id="CHEBI:15378"/>
        <dbReference type="ChEBI" id="CHEBI:30616"/>
        <dbReference type="ChEBI" id="CHEBI:46858"/>
        <dbReference type="ChEBI" id="CHEBI:61978"/>
        <dbReference type="ChEBI" id="CHEBI:456216"/>
        <dbReference type="EC" id="2.7.10.2"/>
    </reaction>
</comment>
<comment type="cofactor">
    <cofactor evidence="2">
        <name>Mg(2+)</name>
        <dbReference type="ChEBI" id="CHEBI:18420"/>
    </cofactor>
    <cofactor evidence="2">
        <name>Mn(2+)</name>
        <dbReference type="ChEBI" id="CHEBI:29035"/>
    </cofactor>
</comment>
<comment type="subunit">
    <text evidence="1">Homodimer (via SH3-domain).</text>
</comment>
<comment type="subcellular location">
    <subcellularLocation>
        <location evidence="8">Cytoplasm</location>
    </subcellularLocation>
</comment>
<comment type="domain">
    <text evidence="1">The architecture of this protein is similar to that of Src-family kinases (SFKs) with one N-terminal SH3 domain, one SH2 domain, and a C-terminal kinase domain.</text>
</comment>
<comment type="PTM">
    <text evidence="1">Phosphorylated at Ser-364 by PKA, leading to increased activity. Autophosphorylated (By similarity).</text>
</comment>
<comment type="similarity">
    <text evidence="3">Belongs to the protein kinase superfamily. Tyr protein kinase family. CSK subfamily.</text>
</comment>
<keyword id="KW-1064">Adaptive immunity</keyword>
<keyword id="KW-0067">ATP-binding</keyword>
<keyword id="KW-0963">Cytoplasm</keyword>
<keyword id="KW-0391">Immunity</keyword>
<keyword id="KW-0418">Kinase</keyword>
<keyword id="KW-0460">Magnesium</keyword>
<keyword id="KW-0464">Manganese</keyword>
<keyword id="KW-0479">Metal-binding</keyword>
<keyword id="KW-0547">Nucleotide-binding</keyword>
<keyword id="KW-0597">Phosphoprotein</keyword>
<keyword id="KW-1185">Reference proteome</keyword>
<keyword id="KW-0727">SH2 domain</keyword>
<keyword id="KW-0728">SH3 domain</keyword>
<keyword id="KW-0808">Transferase</keyword>
<keyword id="KW-0829">Tyrosine-protein kinase</keyword>
<dbReference type="EC" id="2.7.10.2" evidence="2"/>
<dbReference type="EMBL" id="M85039">
    <property type="protein sequence ID" value="AAA51436.1"/>
    <property type="molecule type" value="mRNA"/>
</dbReference>
<dbReference type="PIR" id="A41973">
    <property type="entry name" value="A41973"/>
</dbReference>
<dbReference type="RefSeq" id="NP_990756.1">
    <property type="nucleotide sequence ID" value="NM_205425.1"/>
</dbReference>
<dbReference type="SMR" id="P41239"/>
<dbReference type="BioGRID" id="676646">
    <property type="interactions" value="1"/>
</dbReference>
<dbReference type="FunCoup" id="P41239">
    <property type="interactions" value="953"/>
</dbReference>
<dbReference type="MINT" id="P41239"/>
<dbReference type="STRING" id="9031.ENSGALP00000057776"/>
<dbReference type="PaxDb" id="9031-ENSGALP00000002008"/>
<dbReference type="GeneID" id="396396"/>
<dbReference type="KEGG" id="gga:396396"/>
<dbReference type="CTD" id="1445"/>
<dbReference type="VEuPathDB" id="HostDB:geneid_396396"/>
<dbReference type="eggNOG" id="KOG0197">
    <property type="taxonomic scope" value="Eukaryota"/>
</dbReference>
<dbReference type="InParanoid" id="P41239"/>
<dbReference type="OrthoDB" id="346907at2759"/>
<dbReference type="PhylomeDB" id="P41239"/>
<dbReference type="BRENDA" id="2.7.10.2">
    <property type="organism ID" value="1306"/>
</dbReference>
<dbReference type="PRO" id="PR:P41239"/>
<dbReference type="Proteomes" id="UP000000539">
    <property type="component" value="Unassembled WGS sequence"/>
</dbReference>
<dbReference type="GO" id="GO:0005737">
    <property type="term" value="C:cytoplasm"/>
    <property type="evidence" value="ECO:0007669"/>
    <property type="project" value="UniProtKB-SubCell"/>
</dbReference>
<dbReference type="GO" id="GO:0005886">
    <property type="term" value="C:plasma membrane"/>
    <property type="evidence" value="ECO:0000318"/>
    <property type="project" value="GO_Central"/>
</dbReference>
<dbReference type="GO" id="GO:0005524">
    <property type="term" value="F:ATP binding"/>
    <property type="evidence" value="ECO:0007669"/>
    <property type="project" value="UniProtKB-KW"/>
</dbReference>
<dbReference type="GO" id="GO:0046872">
    <property type="term" value="F:metal ion binding"/>
    <property type="evidence" value="ECO:0007669"/>
    <property type="project" value="UniProtKB-KW"/>
</dbReference>
<dbReference type="GO" id="GO:0004715">
    <property type="term" value="F:non-membrane spanning protein tyrosine kinase activity"/>
    <property type="evidence" value="ECO:0000318"/>
    <property type="project" value="GO_Central"/>
</dbReference>
<dbReference type="GO" id="GO:0002250">
    <property type="term" value="P:adaptive immune response"/>
    <property type="evidence" value="ECO:0007669"/>
    <property type="project" value="UniProtKB-KW"/>
</dbReference>
<dbReference type="GO" id="GO:0034332">
    <property type="term" value="P:adherens junction organization"/>
    <property type="evidence" value="ECO:0000318"/>
    <property type="project" value="GO_Central"/>
</dbReference>
<dbReference type="GO" id="GO:0060368">
    <property type="term" value="P:regulation of Fc receptor mediated stimulatory signaling pathway"/>
    <property type="evidence" value="ECO:0000318"/>
    <property type="project" value="GO_Central"/>
</dbReference>
<dbReference type="CDD" id="cd09937">
    <property type="entry name" value="SH2_csk_like"/>
    <property type="match status" value="1"/>
</dbReference>
<dbReference type="CDD" id="cd11769">
    <property type="entry name" value="SH3_CSK"/>
    <property type="match status" value="1"/>
</dbReference>
<dbReference type="FunFam" id="1.10.510.10:FF:000272">
    <property type="entry name" value="Tyrosine-protein kinase"/>
    <property type="match status" value="1"/>
</dbReference>
<dbReference type="FunFam" id="2.30.30.40:FF:000146">
    <property type="entry name" value="Tyrosine-protein kinase"/>
    <property type="match status" value="1"/>
</dbReference>
<dbReference type="FunFam" id="3.30.200.20:FF:000053">
    <property type="entry name" value="Tyrosine-protein kinase"/>
    <property type="match status" value="1"/>
</dbReference>
<dbReference type="FunFam" id="3.30.505.10:FF:000023">
    <property type="entry name" value="Tyrosine-protein kinase"/>
    <property type="match status" value="1"/>
</dbReference>
<dbReference type="Gene3D" id="3.30.200.20">
    <property type="entry name" value="Phosphorylase Kinase, domain 1"/>
    <property type="match status" value="1"/>
</dbReference>
<dbReference type="Gene3D" id="3.30.505.10">
    <property type="entry name" value="SH2 domain"/>
    <property type="match status" value="1"/>
</dbReference>
<dbReference type="Gene3D" id="2.30.30.40">
    <property type="entry name" value="SH3 Domains"/>
    <property type="match status" value="1"/>
</dbReference>
<dbReference type="Gene3D" id="1.10.510.10">
    <property type="entry name" value="Transferase(Phosphotransferase) domain 1"/>
    <property type="match status" value="1"/>
</dbReference>
<dbReference type="InterPro" id="IPR035027">
    <property type="entry name" value="Csk-like_SH2"/>
</dbReference>
<dbReference type="InterPro" id="IPR011009">
    <property type="entry name" value="Kinase-like_dom_sf"/>
</dbReference>
<dbReference type="InterPro" id="IPR050198">
    <property type="entry name" value="Non-receptor_tyrosine_kinases"/>
</dbReference>
<dbReference type="InterPro" id="IPR000719">
    <property type="entry name" value="Prot_kinase_dom"/>
</dbReference>
<dbReference type="InterPro" id="IPR017441">
    <property type="entry name" value="Protein_kinase_ATP_BS"/>
</dbReference>
<dbReference type="InterPro" id="IPR001245">
    <property type="entry name" value="Ser-Thr/Tyr_kinase_cat_dom"/>
</dbReference>
<dbReference type="InterPro" id="IPR000980">
    <property type="entry name" value="SH2"/>
</dbReference>
<dbReference type="InterPro" id="IPR036860">
    <property type="entry name" value="SH2_dom_sf"/>
</dbReference>
<dbReference type="InterPro" id="IPR036028">
    <property type="entry name" value="SH3-like_dom_sf"/>
</dbReference>
<dbReference type="InterPro" id="IPR001452">
    <property type="entry name" value="SH3_domain"/>
</dbReference>
<dbReference type="InterPro" id="IPR008266">
    <property type="entry name" value="Tyr_kinase_AS"/>
</dbReference>
<dbReference type="InterPro" id="IPR020635">
    <property type="entry name" value="Tyr_kinase_cat_dom"/>
</dbReference>
<dbReference type="PANTHER" id="PTHR24418">
    <property type="entry name" value="TYROSINE-PROTEIN KINASE"/>
    <property type="match status" value="1"/>
</dbReference>
<dbReference type="Pfam" id="PF07714">
    <property type="entry name" value="PK_Tyr_Ser-Thr"/>
    <property type="match status" value="1"/>
</dbReference>
<dbReference type="Pfam" id="PF00017">
    <property type="entry name" value="SH2"/>
    <property type="match status" value="1"/>
</dbReference>
<dbReference type="Pfam" id="PF00018">
    <property type="entry name" value="SH3_1"/>
    <property type="match status" value="1"/>
</dbReference>
<dbReference type="PRINTS" id="PR00401">
    <property type="entry name" value="SH2DOMAIN"/>
</dbReference>
<dbReference type="PRINTS" id="PR00109">
    <property type="entry name" value="TYRKINASE"/>
</dbReference>
<dbReference type="SMART" id="SM00252">
    <property type="entry name" value="SH2"/>
    <property type="match status" value="1"/>
</dbReference>
<dbReference type="SMART" id="SM00326">
    <property type="entry name" value="SH3"/>
    <property type="match status" value="1"/>
</dbReference>
<dbReference type="SMART" id="SM00219">
    <property type="entry name" value="TyrKc"/>
    <property type="match status" value="1"/>
</dbReference>
<dbReference type="SUPFAM" id="SSF56112">
    <property type="entry name" value="Protein kinase-like (PK-like)"/>
    <property type="match status" value="1"/>
</dbReference>
<dbReference type="SUPFAM" id="SSF55550">
    <property type="entry name" value="SH2 domain"/>
    <property type="match status" value="1"/>
</dbReference>
<dbReference type="SUPFAM" id="SSF50044">
    <property type="entry name" value="SH3-domain"/>
    <property type="match status" value="1"/>
</dbReference>
<dbReference type="PROSITE" id="PS00107">
    <property type="entry name" value="PROTEIN_KINASE_ATP"/>
    <property type="match status" value="1"/>
</dbReference>
<dbReference type="PROSITE" id="PS50011">
    <property type="entry name" value="PROTEIN_KINASE_DOM"/>
    <property type="match status" value="1"/>
</dbReference>
<dbReference type="PROSITE" id="PS00109">
    <property type="entry name" value="PROTEIN_KINASE_TYR"/>
    <property type="match status" value="1"/>
</dbReference>
<dbReference type="PROSITE" id="PS50001">
    <property type="entry name" value="SH2"/>
    <property type="match status" value="1"/>
</dbReference>
<dbReference type="PROSITE" id="PS50002">
    <property type="entry name" value="SH3"/>
    <property type="match status" value="1"/>
</dbReference>